<evidence type="ECO:0000255" key="1">
    <source>
        <dbReference type="HAMAP-Rule" id="MF_00676"/>
    </source>
</evidence>
<name>YCGN_ECOBW</name>
<organism>
    <name type="scientific">Escherichia coli (strain K12 / MC4100 / BW2952)</name>
    <dbReference type="NCBI Taxonomy" id="595496"/>
    <lineage>
        <taxon>Bacteria</taxon>
        <taxon>Pseudomonadati</taxon>
        <taxon>Pseudomonadota</taxon>
        <taxon>Gammaproteobacteria</taxon>
        <taxon>Enterobacterales</taxon>
        <taxon>Enterobacteriaceae</taxon>
        <taxon>Escherichia</taxon>
    </lineage>
</organism>
<protein>
    <recommendedName>
        <fullName evidence="1">UPF0260 protein YcgN</fullName>
    </recommendedName>
</protein>
<reference key="1">
    <citation type="journal article" date="2009" name="J. Bacteriol.">
        <title>Genomic sequencing reveals regulatory mutations and recombinational events in the widely used MC4100 lineage of Escherichia coli K-12.</title>
        <authorList>
            <person name="Ferenci T."/>
            <person name="Zhou Z."/>
            <person name="Betteridge T."/>
            <person name="Ren Y."/>
            <person name="Liu Y."/>
            <person name="Feng L."/>
            <person name="Reeves P.R."/>
            <person name="Wang L."/>
        </authorList>
    </citation>
    <scope>NUCLEOTIDE SEQUENCE [LARGE SCALE GENOMIC DNA]</scope>
    <source>
        <strain>K12 / MC4100 / BW2952</strain>
    </source>
</reference>
<gene>
    <name evidence="1" type="primary">ycgN</name>
    <name type="ordered locus">BWG_1006</name>
</gene>
<feature type="chain" id="PRO_1000212522" description="UPF0260 protein YcgN">
    <location>
        <begin position="1"/>
        <end position="153"/>
    </location>
</feature>
<proteinExistence type="inferred from homology"/>
<dbReference type="EMBL" id="CP001396">
    <property type="protein sequence ID" value="ACR62466.1"/>
    <property type="molecule type" value="Genomic_DNA"/>
</dbReference>
<dbReference type="KEGG" id="ebw:BWG_1006"/>
<dbReference type="HOGENOM" id="CLU_109769_2_0_6"/>
<dbReference type="HAMAP" id="MF_00676">
    <property type="entry name" value="UPF0260"/>
    <property type="match status" value="1"/>
</dbReference>
<dbReference type="InterPro" id="IPR005358">
    <property type="entry name" value="Puta_zinc/iron-chelating_dom"/>
</dbReference>
<dbReference type="InterPro" id="IPR008228">
    <property type="entry name" value="UCP006173"/>
</dbReference>
<dbReference type="NCBIfam" id="NF003498">
    <property type="entry name" value="PRK05170.1-1"/>
    <property type="match status" value="1"/>
</dbReference>
<dbReference type="NCBIfam" id="NF003501">
    <property type="entry name" value="PRK05170.1-5"/>
    <property type="match status" value="1"/>
</dbReference>
<dbReference type="NCBIfam" id="NF003503">
    <property type="entry name" value="PRK05170.2-1"/>
    <property type="match status" value="1"/>
</dbReference>
<dbReference type="NCBIfam" id="NF003507">
    <property type="entry name" value="PRK05170.2-5"/>
    <property type="match status" value="1"/>
</dbReference>
<dbReference type="PANTHER" id="PTHR37421">
    <property type="entry name" value="UPF0260 PROTEIN YCGN"/>
    <property type="match status" value="1"/>
</dbReference>
<dbReference type="PANTHER" id="PTHR37421:SF1">
    <property type="entry name" value="UPF0260 PROTEIN YCGN"/>
    <property type="match status" value="1"/>
</dbReference>
<dbReference type="Pfam" id="PF03692">
    <property type="entry name" value="CxxCxxCC"/>
    <property type="match status" value="1"/>
</dbReference>
<dbReference type="PIRSF" id="PIRSF006173">
    <property type="entry name" value="UCP006173"/>
    <property type="match status" value="1"/>
</dbReference>
<comment type="similarity">
    <text evidence="1">Belongs to the UPF0260 family.</text>
</comment>
<sequence>MAEHLMSDVPFWQSKTLDEMSDAEWESLCDGCGQCCLHKLMDEDTDEIYFTNVACRQLNIKTCQCRNYERRFEFEPDCIKLTRENLPTFEWLPMTCAYRLLAEGKDLPAWHPLLTGSKAAMHGERISVRHIAVKESEVIDWQDHILNKPDWAQ</sequence>
<accession>C4ZTM2</accession>